<name>CRY1_DROME</name>
<sequence length="542" mass="62513">MATRGANVIWFRHGLRLHDNPALLAALADKDQGIALIPVFIFDGESAGTKNVGYNRMRFLLDSLQDIDDQLQAATDGRGRLLVFEGEPAYIFRRLHEQVRLHRICIEQDCEPIWNERDESIRSLCRELNIDFVEKVSHTLWDPQLVIETNGGIPPLTYQMFLHTVQIIGLPPRPTADARLEDATFVELDPEFCRSLKLFEQLPTPEHFNVYGDNMGFLAKINWRGGETQALLLLDERLKVEQHAFERGFYLPNQALPNIHDSPKSMSAHLRFGCLSVRRFYWSVHDLFKNVQLRACVRGVQMTGGAHITGQLIWREYFYTMSVNNPNYDRMEGNDICLSIPWAKPNENLLQSWRLGQTGFPLIDGAMRQLLAEGWLHHTLRNTVATFLTRGGLWQSWEHGLQHFLKYLLDADWSVCAGNWMWVSSSAFERLLDSSLVTCPVALAKRLDPDGTYIKQYVPELMNVPKEFVHEPWRMSAEQQEQYECLIGVHYPERIIDLSMAVKRNMLAMKSLRNSLITPPPHCRPSNEEEVRQFFWLADVVV</sequence>
<accession>O77059</accession>
<accession>Q9TYA0</accession>
<keyword id="KW-0002">3D-structure</keyword>
<keyword id="KW-0090">Biological rhythms</keyword>
<keyword id="KW-0157">Chromophore</keyword>
<keyword id="KW-0963">Cytoplasm</keyword>
<keyword id="KW-0274">FAD</keyword>
<keyword id="KW-0285">Flavoprotein</keyword>
<keyword id="KW-0547">Nucleotide-binding</keyword>
<keyword id="KW-0539">Nucleus</keyword>
<keyword id="KW-0600">Photoreceptor protein</keyword>
<keyword id="KW-0675">Receptor</keyword>
<keyword id="KW-1185">Reference proteome</keyword>
<keyword id="KW-0678">Repressor</keyword>
<keyword id="KW-0716">Sensory transduction</keyword>
<keyword id="KW-0804">Transcription</keyword>
<keyword id="KW-0805">Transcription regulation</keyword>
<dbReference type="EMBL" id="AF099734">
    <property type="protein sequence ID" value="AAC83828.1"/>
    <property type="molecule type" value="mRNA"/>
</dbReference>
<dbReference type="EMBL" id="AB018400">
    <property type="protein sequence ID" value="BAA33787.1"/>
    <property type="molecule type" value="mRNA"/>
</dbReference>
<dbReference type="EMBL" id="AB019389">
    <property type="protein sequence ID" value="BAA35000.1"/>
    <property type="molecule type" value="mRNA"/>
</dbReference>
<dbReference type="EMBL" id="AE014297">
    <property type="protein sequence ID" value="AAF55649.1"/>
    <property type="molecule type" value="Genomic_DNA"/>
</dbReference>
<dbReference type="EMBL" id="AY051514">
    <property type="protein sequence ID" value="AAK92938.1"/>
    <property type="molecule type" value="mRNA"/>
</dbReference>
<dbReference type="RefSeq" id="NP_732407.1">
    <property type="nucleotide sequence ID" value="NM_169852.2"/>
</dbReference>
<dbReference type="PDB" id="4GU5">
    <property type="method" value="X-ray"/>
    <property type="resolution" value="2.30 A"/>
    <property type="chains" value="A/B=1-539"/>
</dbReference>
<dbReference type="PDB" id="4JZY">
    <property type="method" value="X-ray"/>
    <property type="resolution" value="2.34 A"/>
    <property type="chains" value="A/B=1-540"/>
</dbReference>
<dbReference type="PDB" id="4K03">
    <property type="method" value="X-ray"/>
    <property type="resolution" value="3.20 A"/>
    <property type="chains" value="A/B=1-542"/>
</dbReference>
<dbReference type="PDB" id="6WTB">
    <property type="method" value="X-ray"/>
    <property type="resolution" value="2.58 A"/>
    <property type="chains" value="A/B=1-539"/>
</dbReference>
<dbReference type="PDB" id="7UD0">
    <property type="method" value="X-ray"/>
    <property type="resolution" value="3.50 A"/>
    <property type="chains" value="A/B=1-539"/>
</dbReference>
<dbReference type="PDB" id="8DD7">
    <property type="method" value="EM"/>
    <property type="resolution" value="3.30 A"/>
    <property type="chains" value="A=1-520"/>
</dbReference>
<dbReference type="PDBsum" id="4GU5"/>
<dbReference type="PDBsum" id="4JZY"/>
<dbReference type="PDBsum" id="4K03"/>
<dbReference type="PDBsum" id="6WTB"/>
<dbReference type="PDBsum" id="7UD0"/>
<dbReference type="PDBsum" id="8DD7"/>
<dbReference type="EMDB" id="EMD-27335"/>
<dbReference type="SMR" id="O77059"/>
<dbReference type="BioGRID" id="67302">
    <property type="interactions" value="139"/>
</dbReference>
<dbReference type="DIP" id="DIP-29424N"/>
<dbReference type="FunCoup" id="O77059">
    <property type="interactions" value="24"/>
</dbReference>
<dbReference type="IntAct" id="O77059">
    <property type="interactions" value="2"/>
</dbReference>
<dbReference type="STRING" id="7227.FBpp0083150"/>
<dbReference type="GlyGen" id="O77059">
    <property type="glycosylation" value="1 site"/>
</dbReference>
<dbReference type="PaxDb" id="7227-FBpp0083150"/>
<dbReference type="DNASU" id="42305"/>
<dbReference type="EnsemblMetazoa" id="FBtr0083736">
    <property type="protein sequence ID" value="FBpp0083150"/>
    <property type="gene ID" value="FBgn0025680"/>
</dbReference>
<dbReference type="GeneID" id="42305"/>
<dbReference type="KEGG" id="dme:Dmel_CG3772"/>
<dbReference type="UCSC" id="CG3772-RA">
    <property type="organism name" value="d. melanogaster"/>
</dbReference>
<dbReference type="AGR" id="FB:FBgn0025680"/>
<dbReference type="CTD" id="42305"/>
<dbReference type="FlyBase" id="FBgn0025680">
    <property type="gene designation" value="cry"/>
</dbReference>
<dbReference type="VEuPathDB" id="VectorBase:FBgn0025680"/>
<dbReference type="eggNOG" id="KOG0133">
    <property type="taxonomic scope" value="Eukaryota"/>
</dbReference>
<dbReference type="HOGENOM" id="CLU_010348_3_4_1"/>
<dbReference type="InParanoid" id="O77059"/>
<dbReference type="OMA" id="IWFRHGL"/>
<dbReference type="OrthoDB" id="435881at2759"/>
<dbReference type="PhylomeDB" id="O77059"/>
<dbReference type="Reactome" id="R-DME-432395">
    <property type="pathway name" value="Degradation of TIM"/>
</dbReference>
<dbReference type="Reactome" id="R-DME-432553">
    <property type="pathway name" value="Phosphorylation of PER and TIM"/>
</dbReference>
<dbReference type="Reactome" id="R-DME-538864">
    <property type="pathway name" value="Degradation of CRY"/>
</dbReference>
<dbReference type="SignaLink" id="O77059"/>
<dbReference type="BioGRID-ORCS" id="42305">
    <property type="hits" value="0 hits in 3 CRISPR screens"/>
</dbReference>
<dbReference type="ChiTaRS" id="cry">
    <property type="organism name" value="fly"/>
</dbReference>
<dbReference type="EvolutionaryTrace" id="O77059"/>
<dbReference type="GenomeRNAi" id="42305"/>
<dbReference type="PRO" id="PR:O77059"/>
<dbReference type="Proteomes" id="UP000000803">
    <property type="component" value="Chromosome 3R"/>
</dbReference>
<dbReference type="Bgee" id="FBgn0025680">
    <property type="expression patterns" value="Expressed in LNv neuron (Drosophila) in brain and 97 other cell types or tissues"/>
</dbReference>
<dbReference type="GO" id="GO:0005737">
    <property type="term" value="C:cytoplasm"/>
    <property type="evidence" value="ECO:0000314"/>
    <property type="project" value="FlyBase"/>
</dbReference>
<dbReference type="GO" id="GO:0005829">
    <property type="term" value="C:cytosol"/>
    <property type="evidence" value="ECO:0000314"/>
    <property type="project" value="FlyBase"/>
</dbReference>
<dbReference type="GO" id="GO:0005654">
    <property type="term" value="C:nucleoplasm"/>
    <property type="evidence" value="ECO:0000304"/>
    <property type="project" value="Reactome"/>
</dbReference>
<dbReference type="GO" id="GO:0005634">
    <property type="term" value="C:nucleus"/>
    <property type="evidence" value="ECO:0000314"/>
    <property type="project" value="FlyBase"/>
</dbReference>
<dbReference type="GO" id="GO:0048471">
    <property type="term" value="C:perinuclear region of cytoplasm"/>
    <property type="evidence" value="ECO:0007669"/>
    <property type="project" value="UniProtKB-SubCell"/>
</dbReference>
<dbReference type="GO" id="GO:0009882">
    <property type="term" value="F:blue light photoreceptor activity"/>
    <property type="evidence" value="ECO:0000315"/>
    <property type="project" value="UniProtKB"/>
</dbReference>
<dbReference type="GO" id="GO:0003677">
    <property type="term" value="F:DNA binding"/>
    <property type="evidence" value="ECO:0000318"/>
    <property type="project" value="GO_Central"/>
</dbReference>
<dbReference type="GO" id="GO:0071949">
    <property type="term" value="F:FAD binding"/>
    <property type="evidence" value="ECO:0000314"/>
    <property type="project" value="UniProtKB"/>
</dbReference>
<dbReference type="GO" id="GO:0050660">
    <property type="term" value="F:flavin adenine dinucleotide binding"/>
    <property type="evidence" value="ECO:0000314"/>
    <property type="project" value="UniProtKB"/>
</dbReference>
<dbReference type="GO" id="GO:0009881">
    <property type="term" value="F:photoreceptor activity"/>
    <property type="evidence" value="ECO:0000314"/>
    <property type="project" value="FlyBase"/>
</dbReference>
<dbReference type="GO" id="GO:0009785">
    <property type="term" value="P:blue light signaling pathway"/>
    <property type="evidence" value="ECO:0000315"/>
    <property type="project" value="FlyBase"/>
</dbReference>
<dbReference type="GO" id="GO:0071482">
    <property type="term" value="P:cellular response to light stimulus"/>
    <property type="evidence" value="ECO:0000315"/>
    <property type="project" value="FlyBase"/>
</dbReference>
<dbReference type="GO" id="GO:0048512">
    <property type="term" value="P:circadian behavior"/>
    <property type="evidence" value="ECO:0000315"/>
    <property type="project" value="FlyBase"/>
</dbReference>
<dbReference type="GO" id="GO:0032922">
    <property type="term" value="P:circadian regulation of gene expression"/>
    <property type="evidence" value="ECO:0000315"/>
    <property type="project" value="FlyBase"/>
</dbReference>
<dbReference type="GO" id="GO:0007623">
    <property type="term" value="P:circadian rhythm"/>
    <property type="evidence" value="ECO:0000315"/>
    <property type="project" value="FlyBase"/>
</dbReference>
<dbReference type="GO" id="GO:0050980">
    <property type="term" value="P:detection of light stimulus involved in magnetoreception"/>
    <property type="evidence" value="ECO:0000315"/>
    <property type="project" value="UniProtKB"/>
</dbReference>
<dbReference type="GO" id="GO:0009649">
    <property type="term" value="P:entrainment of circadian clock"/>
    <property type="evidence" value="ECO:0000314"/>
    <property type="project" value="FlyBase"/>
</dbReference>
<dbReference type="GO" id="GO:0043153">
    <property type="term" value="P:entrainment of circadian clock by photoperiod"/>
    <property type="evidence" value="ECO:0000315"/>
    <property type="project" value="FlyBase"/>
</dbReference>
<dbReference type="GO" id="GO:0042332">
    <property type="term" value="P:gravitaxis"/>
    <property type="evidence" value="ECO:0000315"/>
    <property type="project" value="FlyBase"/>
</dbReference>
<dbReference type="GO" id="GO:0045475">
    <property type="term" value="P:locomotor rhythm"/>
    <property type="evidence" value="ECO:0000315"/>
    <property type="project" value="FlyBase"/>
</dbReference>
<dbReference type="GO" id="GO:0050958">
    <property type="term" value="P:magnetoreception"/>
    <property type="evidence" value="ECO:0000315"/>
    <property type="project" value="FlyBase"/>
</dbReference>
<dbReference type="GO" id="GO:0045892">
    <property type="term" value="P:negative regulation of DNA-templated transcription"/>
    <property type="evidence" value="ECO:0000315"/>
    <property type="project" value="UniProtKB"/>
</dbReference>
<dbReference type="GO" id="GO:0007602">
    <property type="term" value="P:phototransduction"/>
    <property type="evidence" value="ECO:0000315"/>
    <property type="project" value="FlyBase"/>
</dbReference>
<dbReference type="GO" id="GO:0042752">
    <property type="term" value="P:regulation of circadian rhythm"/>
    <property type="evidence" value="ECO:0000314"/>
    <property type="project" value="FlyBase"/>
</dbReference>
<dbReference type="GO" id="GO:0045187">
    <property type="term" value="P:regulation of circadian sleep/wake cycle, sleep"/>
    <property type="evidence" value="ECO:0000315"/>
    <property type="project" value="FlyBase"/>
</dbReference>
<dbReference type="GO" id="GO:0009637">
    <property type="term" value="P:response to blue light"/>
    <property type="evidence" value="ECO:0000315"/>
    <property type="project" value="FlyBase"/>
</dbReference>
<dbReference type="GO" id="GO:0009416">
    <property type="term" value="P:response to light stimulus"/>
    <property type="evidence" value="ECO:0000315"/>
    <property type="project" value="FlyBase"/>
</dbReference>
<dbReference type="GO" id="GO:0071000">
    <property type="term" value="P:response to magnetism"/>
    <property type="evidence" value="ECO:0000315"/>
    <property type="project" value="FlyBase"/>
</dbReference>
<dbReference type="GO" id="GO:0009588">
    <property type="term" value="P:UV-A, blue light phototransduction"/>
    <property type="evidence" value="ECO:0000250"/>
    <property type="project" value="FlyBase"/>
</dbReference>
<dbReference type="FunFam" id="1.10.579.10:FF:000004">
    <property type="entry name" value="Cryptochrome-1"/>
    <property type="match status" value="1"/>
</dbReference>
<dbReference type="FunFam" id="3.40.50.620:FF:000243">
    <property type="entry name" value="Cryptochrome-1"/>
    <property type="match status" value="1"/>
</dbReference>
<dbReference type="Gene3D" id="1.25.40.80">
    <property type="match status" value="1"/>
</dbReference>
<dbReference type="Gene3D" id="1.10.579.10">
    <property type="entry name" value="DNA Cyclobutane Dipyrimidine Photolyase, subunit A, domain 3"/>
    <property type="match status" value="1"/>
</dbReference>
<dbReference type="Gene3D" id="3.40.50.620">
    <property type="entry name" value="HUPs"/>
    <property type="match status" value="1"/>
</dbReference>
<dbReference type="IDEAL" id="IID50267"/>
<dbReference type="InterPro" id="IPR036134">
    <property type="entry name" value="Crypto/Photolyase_FAD-like_sf"/>
</dbReference>
<dbReference type="InterPro" id="IPR036155">
    <property type="entry name" value="Crypto/Photolyase_N_sf"/>
</dbReference>
<dbReference type="InterPro" id="IPR005101">
    <property type="entry name" value="Cryptochr/Photolyase_FAD-bd"/>
</dbReference>
<dbReference type="InterPro" id="IPR002081">
    <property type="entry name" value="Cryptochrome/DNA_photolyase_1"/>
</dbReference>
<dbReference type="InterPro" id="IPR006050">
    <property type="entry name" value="DNA_photolyase_N"/>
</dbReference>
<dbReference type="InterPro" id="IPR014729">
    <property type="entry name" value="Rossmann-like_a/b/a_fold"/>
</dbReference>
<dbReference type="PANTHER" id="PTHR11455">
    <property type="entry name" value="CRYPTOCHROME"/>
    <property type="match status" value="1"/>
</dbReference>
<dbReference type="PANTHER" id="PTHR11455:SF17">
    <property type="entry name" value="CRYPTOCHROME-1"/>
    <property type="match status" value="1"/>
</dbReference>
<dbReference type="Pfam" id="PF00875">
    <property type="entry name" value="DNA_photolyase"/>
    <property type="match status" value="1"/>
</dbReference>
<dbReference type="Pfam" id="PF03441">
    <property type="entry name" value="FAD_binding_7"/>
    <property type="match status" value="1"/>
</dbReference>
<dbReference type="PRINTS" id="PR00147">
    <property type="entry name" value="DNAPHOTLYASE"/>
</dbReference>
<dbReference type="SUPFAM" id="SSF48173">
    <property type="entry name" value="Cryptochrome/photolyase FAD-binding domain"/>
    <property type="match status" value="1"/>
</dbReference>
<dbReference type="SUPFAM" id="SSF52425">
    <property type="entry name" value="Cryptochrome/photolyase, N-terminal domain"/>
    <property type="match status" value="1"/>
</dbReference>
<dbReference type="PROSITE" id="PS51645">
    <property type="entry name" value="PHR_CRY_ALPHA_BETA"/>
    <property type="match status" value="1"/>
</dbReference>
<organism>
    <name type="scientific">Drosophila melanogaster</name>
    <name type="common">Fruit fly</name>
    <dbReference type="NCBI Taxonomy" id="7227"/>
    <lineage>
        <taxon>Eukaryota</taxon>
        <taxon>Metazoa</taxon>
        <taxon>Ecdysozoa</taxon>
        <taxon>Arthropoda</taxon>
        <taxon>Hexapoda</taxon>
        <taxon>Insecta</taxon>
        <taxon>Pterygota</taxon>
        <taxon>Neoptera</taxon>
        <taxon>Endopterygota</taxon>
        <taxon>Diptera</taxon>
        <taxon>Brachycera</taxon>
        <taxon>Muscomorpha</taxon>
        <taxon>Ephydroidea</taxon>
        <taxon>Drosophilidae</taxon>
        <taxon>Drosophila</taxon>
        <taxon>Sophophora</taxon>
    </lineage>
</organism>
<comment type="function">
    <text evidence="3 4 5 10 11 12 13 17 18 19">Blue light-dependent regulator that is the input of the circadian feedback loop (PubMed:10063806, PubMed:10233998, PubMed:10417378, PubMed:16527739, PubMed:17298948, PubMed:18597555, PubMed:36994075, PubMed:9845369). Has no photolyase activity for cyclobutane pyrimidine dimers or 6-4 photoproducts (PubMed:10063806). Regulation of expression by light suggests a role in photoreception for locomotor activity rhythms (PubMed:10063806, PubMed:10233998, PubMed:9845369). Functions, together with per, as a transcriptional repressor required for the oscillation of peripheral circadian clocks and for the correct specification of clock cells (PubMed:10417378, PubMed:16527739, PubMed:36994075, PubMed:9845370). Genes directly activated by the transcription factors Clock (Clk) and cycle (cyc) are repressed by cry (PubMed:10417378, PubMed:16527739). Necessary for light-dependent magnetosensitivity, an intact circadian system is not required for the magnetoreception mechanism to operate (PubMed:18641630). Required for both the naive and trained responses to magnetic field, consistent with the notion that cry is in the input pathway of magnetic sensing (PubMed:18641630).</text>
</comment>
<comment type="cofactor">
    <cofactor evidence="3 11 12 15">
        <name>FAD</name>
        <dbReference type="ChEBI" id="CHEBI:57692"/>
    </cofactor>
    <text evidence="3 11 12 15">Binds 1 FAD per subunit. The bound form of FAD in the inactive state of cry is oxidized FAD, not reduced. After activation by blue light the FAD is in an anionic radical state, which would be paramagnetic. Green light, which reduces levels of radical intermediate, has an antagonistic effect on function.</text>
</comment>
<comment type="subunit">
    <text evidence="5 7 14 15 16">Interacts with tim and per; promoted by light conditions (PubMed:10417378, PubMed:11448767). Interaction with tim irreversibly commits tim to proteasomal degradation (PubMed:10417378). Interacts with l(1)G0136/CG8198 (PubMed:26569474).</text>
</comment>
<comment type="interaction">
    <interactant intactId="EBI-94117">
        <id>O77059</id>
    </interactant>
    <interactant intactId="EBI-242141">
        <id>P18431</id>
        <label>sgg</label>
    </interactant>
    <organismsDiffer>false</organismsDiffer>
    <experiments>2</experiments>
</comment>
<comment type="subcellular location">
    <subcellularLocation>
        <location evidence="5 9">Cytoplasm</location>
    </subcellularLocation>
    <subcellularLocation>
        <location evidence="5 9">Cytoplasm</location>
        <location evidence="5 9">Perinuclear region</location>
    </subcellularLocation>
    <subcellularLocation>
        <location evidence="5 9">Nucleus</location>
    </subcellularLocation>
    <text evidence="5 9">Nuclear translocation initiates after the perception of a light signal. Accumulates in the perinuclear region about one hour before translocation into the nucleus. Translocation occurs through interaction with other Clock proteins such as tim and per.</text>
</comment>
<comment type="tissue specificity">
    <text evidence="3 4 18">Expressed at higher levels in the head than in body and it is more expressed in antennae than in legs, wings and mouth appendages. Prominent expression is seen in cells of the lateral brain, which are close to or coincident with the clock neurons. Abundance oscillates in a circadian manner.</text>
</comment>
<comment type="induction">
    <text evidence="18">Expression is regulated by light and circadian rhythms. Under circadian regulation, expression is influenced by the clock pacemaker genes period, timeless, Clock and cycle.</text>
</comment>
<comment type="domain">
    <text evidence="9">FAD-binding region regulates cry stability, cry-tim interaction, and circadian photosensitivity.</text>
</comment>
<comment type="domain">
    <text>Photolyase/cryptochrome alpha/beta domain is sufficient for light detection and phototransduction.</text>
</comment>
<comment type="disruption phenotype">
    <text evidence="19">Flies exhibit poor synchronization to light-dark cycles and show no response to brief light pulses. Mutant abolishes rhythmic tim and per expression in photoreceptor and glial cells, but not within certain pacemaker neurons of adult brain.</text>
</comment>
<comment type="miscellaneous">
    <text>Unstable upon light exposure. Light induces the degradation of cry, likely due to conformational change in the photoreceptor leading to targeting to the proteasome.</text>
</comment>
<comment type="miscellaneous">
    <text evidence="11">Appears to bind 5,10-methenyltetrahydrofolate at substoichiometric levels.</text>
</comment>
<comment type="similarity">
    <text evidence="2">Belongs to the DNA photolyase class-1 family.</text>
</comment>
<feature type="chain" id="PRO_0000348597" description="Cryptochrome-1">
    <location>
        <begin position="1"/>
        <end position="542"/>
    </location>
</feature>
<feature type="domain" description="Photolyase/cryptochrome alpha/beta">
    <location>
        <begin position="5"/>
        <end position="140"/>
    </location>
</feature>
<feature type="binding site" evidence="14 15">
    <location>
        <position position="237"/>
    </location>
    <ligand>
        <name>FAD</name>
        <dbReference type="ChEBI" id="CHEBI:57692"/>
    </ligand>
</feature>
<feature type="binding site" evidence="14 15">
    <location>
        <position position="265"/>
    </location>
    <ligand>
        <name>FAD</name>
        <dbReference type="ChEBI" id="CHEBI:57692"/>
    </ligand>
</feature>
<feature type="binding site" evidence="1">
    <location>
        <position position="267"/>
    </location>
    <ligand>
        <name>FAD</name>
        <dbReference type="ChEBI" id="CHEBI:57692"/>
    </ligand>
</feature>
<feature type="binding site" evidence="14 15">
    <location>
        <position position="311"/>
    </location>
    <ligand>
        <name>FAD</name>
        <dbReference type="ChEBI" id="CHEBI:57692"/>
    </ligand>
</feature>
<feature type="binding site" evidence="14 15">
    <location>
        <position position="378"/>
    </location>
    <ligand>
        <name>FAD</name>
        <dbReference type="ChEBI" id="CHEBI:57692"/>
    </ligand>
</feature>
<feature type="binding site" evidence="14 15">
    <location>
        <begin position="410"/>
        <end position="412"/>
    </location>
    <ligand>
        <name>FAD</name>
        <dbReference type="ChEBI" id="CHEBI:57692"/>
    </ligand>
</feature>
<feature type="binding site" evidence="14 15">
    <location>
        <position position="416"/>
    </location>
    <ligand>
        <name>FAD</name>
        <dbReference type="ChEBI" id="CHEBI:57692"/>
    </ligand>
</feature>
<feature type="binding site" evidence="14 15">
    <location>
        <position position="419"/>
    </location>
    <ligand>
        <name>FAD</name>
        <dbReference type="ChEBI" id="CHEBI:57692"/>
    </ligand>
</feature>
<feature type="mutagenesis site" description="Accelerates formation and decay of the FAD radical." evidence="15">
    <original>C</original>
    <variation>A</variation>
    <location>
        <position position="337"/>
    </location>
</feature>
<feature type="mutagenesis site" description="Abolishes formation of the FAD radical." evidence="15">
    <original>W</original>
    <variation>F</variation>
    <location>
        <position position="397"/>
    </location>
</feature>
<feature type="mutagenesis site" description="In cryb: Loss of accumulation. In photoreceptors, leads to an equivalent distribution of per in the nuclei in both day and night ultimately resulting in a slight decrease in Bdbt foci development." evidence="17 19">
    <original>D</original>
    <variation>N</variation>
    <location>
        <position position="410"/>
    </location>
</feature>
<feature type="mutagenesis site" description="Accelerates decay of the FAD radical." evidence="15">
    <original>C</original>
    <variation>A</variation>
    <location>
        <position position="416"/>
    </location>
</feature>
<feature type="mutagenesis site" description="Abolishes formation of the FAD radical." evidence="15">
    <original>W</original>
    <variation>A</variation>
    <location>
        <position position="420"/>
    </location>
</feature>
<feature type="mutagenesis site" description="Accelerates formation and decay of the FAD radical." evidence="15">
    <original>C</original>
    <variation>A</variation>
    <location>
        <position position="523"/>
    </location>
</feature>
<feature type="mutagenesis site" description="Slows down the decay of the FAD radical." evidence="15">
    <original>S</original>
    <variation>A</variation>
    <location>
        <position position="526"/>
    </location>
</feature>
<feature type="sequence conflict" description="In Ref. 3; BAA35000." evidence="20" ref="3">
    <original>L</original>
    <variation>H</variation>
    <location>
        <position position="232"/>
    </location>
</feature>
<feature type="sequence conflict" description="In Ref. 3; BAA35000." evidence="20" ref="3">
    <original>D</original>
    <variation>E</variation>
    <location>
        <position position="335"/>
    </location>
</feature>
<feature type="sequence conflict" description="In Ref. 3; BAA35000." evidence="20" ref="3">
    <original>N</original>
    <variation>D</variation>
    <location>
        <position position="348"/>
    </location>
</feature>
<feature type="strand" evidence="27">
    <location>
        <begin position="6"/>
        <end position="13"/>
    </location>
</feature>
<feature type="strand" evidence="27">
    <location>
        <begin position="17"/>
        <end position="19"/>
    </location>
</feature>
<feature type="helix" evidence="27">
    <location>
        <begin position="21"/>
        <end position="27"/>
    </location>
</feature>
<feature type="helix" evidence="27">
    <location>
        <begin position="30"/>
        <end position="32"/>
    </location>
</feature>
<feature type="strand" evidence="27">
    <location>
        <begin position="35"/>
        <end position="42"/>
    </location>
</feature>
<feature type="turn" evidence="27">
    <location>
        <begin position="46"/>
        <end position="48"/>
    </location>
</feature>
<feature type="helix" evidence="27">
    <location>
        <begin position="54"/>
        <end position="74"/>
    </location>
</feature>
<feature type="turn" evidence="27">
    <location>
        <begin position="75"/>
        <end position="77"/>
    </location>
</feature>
<feature type="strand" evidence="27">
    <location>
        <begin position="82"/>
        <end position="86"/>
    </location>
</feature>
<feature type="helix" evidence="27">
    <location>
        <begin position="88"/>
        <end position="98"/>
    </location>
</feature>
<feature type="strand" evidence="27">
    <location>
        <begin position="101"/>
        <end position="107"/>
    </location>
</feature>
<feature type="helix" evidence="27">
    <location>
        <begin position="112"/>
        <end position="114"/>
    </location>
</feature>
<feature type="helix" evidence="27">
    <location>
        <begin position="115"/>
        <end position="128"/>
    </location>
</feature>
<feature type="strand" evidence="27">
    <location>
        <begin position="131"/>
        <end position="135"/>
    </location>
</feature>
<feature type="strand" evidence="27">
    <location>
        <begin position="138"/>
        <end position="141"/>
    </location>
</feature>
<feature type="helix" evidence="27">
    <location>
        <begin position="143"/>
        <end position="149"/>
    </location>
</feature>
<feature type="turn" evidence="28">
    <location>
        <begin position="150"/>
        <end position="152"/>
    </location>
</feature>
<feature type="helix" evidence="27">
    <location>
        <begin position="158"/>
        <end position="168"/>
    </location>
</feature>
<feature type="helix" evidence="31">
    <location>
        <begin position="180"/>
        <end position="182"/>
    </location>
</feature>
<feature type="helix" evidence="27">
    <location>
        <begin position="190"/>
        <end position="195"/>
    </location>
</feature>
<feature type="helix" evidence="27">
    <location>
        <begin position="205"/>
        <end position="208"/>
    </location>
</feature>
<feature type="strand" evidence="28">
    <location>
        <begin position="212"/>
        <end position="214"/>
    </location>
</feature>
<feature type="helix" evidence="27">
    <location>
        <begin position="227"/>
        <end position="247"/>
    </location>
</feature>
<feature type="turn" evidence="27">
    <location>
        <begin position="252"/>
        <end position="254"/>
    </location>
</feature>
<feature type="helix" evidence="27">
    <location>
        <begin position="267"/>
        <end position="271"/>
    </location>
</feature>
<feature type="helix" evidence="27">
    <location>
        <begin position="277"/>
        <end position="288"/>
    </location>
</feature>
<feature type="strand" evidence="30">
    <location>
        <begin position="296"/>
        <end position="301"/>
    </location>
</feature>
<feature type="helix" evidence="27">
    <location>
        <begin position="303"/>
        <end position="305"/>
    </location>
</feature>
<feature type="helix" evidence="27">
    <location>
        <begin position="306"/>
        <end position="322"/>
    </location>
</feature>
<feature type="turn" evidence="27">
    <location>
        <begin position="326"/>
        <end position="329"/>
    </location>
</feature>
<feature type="strand" evidence="31">
    <location>
        <begin position="335"/>
        <end position="337"/>
    </location>
</feature>
<feature type="helix" evidence="27">
    <location>
        <begin position="347"/>
        <end position="354"/>
    </location>
</feature>
<feature type="helix" evidence="27">
    <location>
        <begin position="361"/>
        <end position="373"/>
    </location>
</feature>
<feature type="helix" evidence="27">
    <location>
        <begin position="378"/>
        <end position="388"/>
    </location>
</feature>
<feature type="turn" evidence="27">
    <location>
        <begin position="389"/>
        <end position="393"/>
    </location>
</feature>
<feature type="helix" evidence="27">
    <location>
        <begin position="397"/>
        <end position="407"/>
    </location>
</feature>
<feature type="helix" evidence="27">
    <location>
        <begin position="413"/>
        <end position="425"/>
    </location>
</feature>
<feature type="helix" evidence="27">
    <location>
        <begin position="430"/>
        <end position="433"/>
    </location>
</feature>
<feature type="helix" evidence="27">
    <location>
        <begin position="435"/>
        <end position="438"/>
    </location>
</feature>
<feature type="helix" evidence="27">
    <location>
        <begin position="440"/>
        <end position="447"/>
    </location>
</feature>
<feature type="helix" evidence="27">
    <location>
        <begin position="452"/>
        <end position="457"/>
    </location>
</feature>
<feature type="helix" evidence="27">
    <location>
        <begin position="459"/>
        <end position="461"/>
    </location>
</feature>
<feature type="strand" evidence="29">
    <location>
        <begin position="462"/>
        <end position="464"/>
    </location>
</feature>
<feature type="helix" evidence="27">
    <location>
        <begin position="466"/>
        <end position="469"/>
    </location>
</feature>
<feature type="helix" evidence="27">
    <location>
        <begin position="472"/>
        <end position="474"/>
    </location>
</feature>
<feature type="helix" evidence="27">
    <location>
        <begin position="477"/>
        <end position="482"/>
    </location>
</feature>
<feature type="turn" evidence="27">
    <location>
        <begin position="487"/>
        <end position="489"/>
    </location>
</feature>
<feature type="helix" evidence="27">
    <location>
        <begin position="498"/>
        <end position="516"/>
    </location>
</feature>
<feature type="helix" evidence="27">
    <location>
        <begin position="528"/>
        <end position="535"/>
    </location>
</feature>
<gene>
    <name evidence="22 26" type="primary">cry</name>
    <name type="ORF">CG3772</name>
</gene>
<proteinExistence type="evidence at protein level"/>
<protein>
    <recommendedName>
        <fullName>Cryptochrome-1</fullName>
        <shortName evidence="24">DmCRY1</shortName>
        <shortName evidence="25">dcry</shortName>
    </recommendedName>
    <alternativeName>
        <fullName evidence="25">Blue light photoreceptor</fullName>
    </alternativeName>
</protein>
<evidence type="ECO:0000250" key="1"/>
<evidence type="ECO:0000255" key="2"/>
<evidence type="ECO:0000269" key="3">
    <source>
    </source>
</evidence>
<evidence type="ECO:0000269" key="4">
    <source>
    </source>
</evidence>
<evidence type="ECO:0000269" key="5">
    <source>
    </source>
</evidence>
<evidence type="ECO:0000269" key="6">
    <source>
    </source>
</evidence>
<evidence type="ECO:0000269" key="7">
    <source>
    </source>
</evidence>
<evidence type="ECO:0000269" key="8">
    <source>
    </source>
</evidence>
<evidence type="ECO:0000269" key="9">
    <source>
    </source>
</evidence>
<evidence type="ECO:0000269" key="10">
    <source>
    </source>
</evidence>
<evidence type="ECO:0000269" key="11">
    <source>
    </source>
</evidence>
<evidence type="ECO:0000269" key="12">
    <source>
    </source>
</evidence>
<evidence type="ECO:0000269" key="13">
    <source>
    </source>
</evidence>
<evidence type="ECO:0000269" key="14">
    <source>
    </source>
</evidence>
<evidence type="ECO:0000269" key="15">
    <source>
    </source>
</evidence>
<evidence type="ECO:0000269" key="16">
    <source>
    </source>
</evidence>
<evidence type="ECO:0000269" key="17">
    <source>
    </source>
</evidence>
<evidence type="ECO:0000269" key="18">
    <source>
    </source>
</evidence>
<evidence type="ECO:0000269" key="19">
    <source>
    </source>
</evidence>
<evidence type="ECO:0000305" key="20"/>
<evidence type="ECO:0000312" key="21">
    <source>
        <dbReference type="EMBL" id="AAC83828.1"/>
    </source>
</evidence>
<evidence type="ECO:0000312" key="22">
    <source>
        <dbReference type="EMBL" id="AAF55649.1"/>
    </source>
</evidence>
<evidence type="ECO:0000312" key="23">
    <source>
        <dbReference type="EMBL" id="AAK92938.1"/>
    </source>
</evidence>
<evidence type="ECO:0000312" key="24">
    <source>
        <dbReference type="EMBL" id="BAA33787.1"/>
    </source>
</evidence>
<evidence type="ECO:0000312" key="25">
    <source>
        <dbReference type="EMBL" id="BAA35000.1"/>
    </source>
</evidence>
<evidence type="ECO:0000312" key="26">
    <source>
        <dbReference type="FlyBase" id="FBgn0025680"/>
    </source>
</evidence>
<evidence type="ECO:0007829" key="27">
    <source>
        <dbReference type="PDB" id="4GU5"/>
    </source>
</evidence>
<evidence type="ECO:0007829" key="28">
    <source>
        <dbReference type="PDB" id="4JZY"/>
    </source>
</evidence>
<evidence type="ECO:0007829" key="29">
    <source>
        <dbReference type="PDB" id="4K03"/>
    </source>
</evidence>
<evidence type="ECO:0007829" key="30">
    <source>
        <dbReference type="PDB" id="6WTB"/>
    </source>
</evidence>
<evidence type="ECO:0007829" key="31">
    <source>
        <dbReference type="PDB" id="8DD7"/>
    </source>
</evidence>
<reference evidence="20 21" key="1">
    <citation type="journal article" date="1998" name="Cell">
        <title>CRY, a Drosophila clock and light-regulated cryptochrome, is a major contributor to circadian rhythm resetting and photosensitivity.</title>
        <authorList>
            <person name="Emery P."/>
            <person name="So W.V."/>
            <person name="Kaneko M."/>
            <person name="Hall J.C."/>
            <person name="Rosbash M."/>
        </authorList>
    </citation>
    <scope>NUCLEOTIDE SEQUENCE [MRNA]</scope>
    <scope>FUNCTION</scope>
    <scope>TISSUE SPECIFICITY</scope>
    <scope>INDUCTION</scope>
</reference>
<reference evidence="20 24" key="2">
    <citation type="journal article" date="1999" name="Photochem. Photobiol.">
        <title>A putative blue-light receptor from Drosophila melanogaster.</title>
        <authorList>
            <person name="Okano S."/>
            <person name="Kanno S."/>
            <person name="Takao M."/>
            <person name="Eker A.P.M."/>
            <person name="Isono K."/>
            <person name="Tsukahara Y."/>
            <person name="Yasui A."/>
        </authorList>
    </citation>
    <scope>NUCLEOTIDE SEQUENCE [MRNA]</scope>
    <scope>FUNCTION</scope>
    <scope>LACK OF PHOTOLYASE ACTIVITY</scope>
    <scope>TISSUE SPECIFICITY</scope>
    <scope>FAD-BINDING</scope>
    <source>
        <strain evidence="3">Berkeley</strain>
        <tissue evidence="3">Head</tissue>
    </source>
</reference>
<reference evidence="25" key="3">
    <citation type="submission" date="1998-10" db="EMBL/GenBank/DDBJ databases">
        <authorList>
            <person name="Todo T."/>
            <person name="Ishikawa T."/>
        </authorList>
    </citation>
    <scope>NUCLEOTIDE SEQUENCE [MRNA]</scope>
    <source>
        <tissue evidence="25">Head</tissue>
    </source>
</reference>
<reference evidence="22" key="4">
    <citation type="journal article" date="2000" name="Science">
        <title>The genome sequence of Drosophila melanogaster.</title>
        <authorList>
            <person name="Adams M.D."/>
            <person name="Celniker S.E."/>
            <person name="Holt R.A."/>
            <person name="Evans C.A."/>
            <person name="Gocayne J.D."/>
            <person name="Amanatides P.G."/>
            <person name="Scherer S.E."/>
            <person name="Li P.W."/>
            <person name="Hoskins R.A."/>
            <person name="Galle R.F."/>
            <person name="George R.A."/>
            <person name="Lewis S.E."/>
            <person name="Richards S."/>
            <person name="Ashburner M."/>
            <person name="Henderson S.N."/>
            <person name="Sutton G.G."/>
            <person name="Wortman J.R."/>
            <person name="Yandell M.D."/>
            <person name="Zhang Q."/>
            <person name="Chen L.X."/>
            <person name="Brandon R.C."/>
            <person name="Rogers Y.-H.C."/>
            <person name="Blazej R.G."/>
            <person name="Champe M."/>
            <person name="Pfeiffer B.D."/>
            <person name="Wan K.H."/>
            <person name="Doyle C."/>
            <person name="Baxter E.G."/>
            <person name="Helt G."/>
            <person name="Nelson C.R."/>
            <person name="Miklos G.L.G."/>
            <person name="Abril J.F."/>
            <person name="Agbayani A."/>
            <person name="An H.-J."/>
            <person name="Andrews-Pfannkoch C."/>
            <person name="Baldwin D."/>
            <person name="Ballew R.M."/>
            <person name="Basu A."/>
            <person name="Baxendale J."/>
            <person name="Bayraktaroglu L."/>
            <person name="Beasley E.M."/>
            <person name="Beeson K.Y."/>
            <person name="Benos P.V."/>
            <person name="Berman B.P."/>
            <person name="Bhandari D."/>
            <person name="Bolshakov S."/>
            <person name="Borkova D."/>
            <person name="Botchan M.R."/>
            <person name="Bouck J."/>
            <person name="Brokstein P."/>
            <person name="Brottier P."/>
            <person name="Burtis K.C."/>
            <person name="Busam D.A."/>
            <person name="Butler H."/>
            <person name="Cadieu E."/>
            <person name="Center A."/>
            <person name="Chandra I."/>
            <person name="Cherry J.M."/>
            <person name="Cawley S."/>
            <person name="Dahlke C."/>
            <person name="Davenport L.B."/>
            <person name="Davies P."/>
            <person name="de Pablos B."/>
            <person name="Delcher A."/>
            <person name="Deng Z."/>
            <person name="Mays A.D."/>
            <person name="Dew I."/>
            <person name="Dietz S.M."/>
            <person name="Dodson K."/>
            <person name="Doup L.E."/>
            <person name="Downes M."/>
            <person name="Dugan-Rocha S."/>
            <person name="Dunkov B.C."/>
            <person name="Dunn P."/>
            <person name="Durbin K.J."/>
            <person name="Evangelista C.C."/>
            <person name="Ferraz C."/>
            <person name="Ferriera S."/>
            <person name="Fleischmann W."/>
            <person name="Fosler C."/>
            <person name="Gabrielian A.E."/>
            <person name="Garg N.S."/>
            <person name="Gelbart W.M."/>
            <person name="Glasser K."/>
            <person name="Glodek A."/>
            <person name="Gong F."/>
            <person name="Gorrell J.H."/>
            <person name="Gu Z."/>
            <person name="Guan P."/>
            <person name="Harris M."/>
            <person name="Harris N.L."/>
            <person name="Harvey D.A."/>
            <person name="Heiman T.J."/>
            <person name="Hernandez J.R."/>
            <person name="Houck J."/>
            <person name="Hostin D."/>
            <person name="Houston K.A."/>
            <person name="Howland T.J."/>
            <person name="Wei M.-H."/>
            <person name="Ibegwam C."/>
            <person name="Jalali M."/>
            <person name="Kalush F."/>
            <person name="Karpen G.H."/>
            <person name="Ke Z."/>
            <person name="Kennison J.A."/>
            <person name="Ketchum K.A."/>
            <person name="Kimmel B.E."/>
            <person name="Kodira C.D."/>
            <person name="Kraft C.L."/>
            <person name="Kravitz S."/>
            <person name="Kulp D."/>
            <person name="Lai Z."/>
            <person name="Lasko P."/>
            <person name="Lei Y."/>
            <person name="Levitsky A.A."/>
            <person name="Li J.H."/>
            <person name="Li Z."/>
            <person name="Liang Y."/>
            <person name="Lin X."/>
            <person name="Liu X."/>
            <person name="Mattei B."/>
            <person name="McIntosh T.C."/>
            <person name="McLeod M.P."/>
            <person name="McPherson D."/>
            <person name="Merkulov G."/>
            <person name="Milshina N.V."/>
            <person name="Mobarry C."/>
            <person name="Morris J."/>
            <person name="Moshrefi A."/>
            <person name="Mount S.M."/>
            <person name="Moy M."/>
            <person name="Murphy B."/>
            <person name="Murphy L."/>
            <person name="Muzny D.M."/>
            <person name="Nelson D.L."/>
            <person name="Nelson D.R."/>
            <person name="Nelson K.A."/>
            <person name="Nixon K."/>
            <person name="Nusskern D.R."/>
            <person name="Pacleb J.M."/>
            <person name="Palazzolo M."/>
            <person name="Pittman G.S."/>
            <person name="Pan S."/>
            <person name="Pollard J."/>
            <person name="Puri V."/>
            <person name="Reese M.G."/>
            <person name="Reinert K."/>
            <person name="Remington K."/>
            <person name="Saunders R.D.C."/>
            <person name="Scheeler F."/>
            <person name="Shen H."/>
            <person name="Shue B.C."/>
            <person name="Siden-Kiamos I."/>
            <person name="Simpson M."/>
            <person name="Skupski M.P."/>
            <person name="Smith T.J."/>
            <person name="Spier E."/>
            <person name="Spradling A.C."/>
            <person name="Stapleton M."/>
            <person name="Strong R."/>
            <person name="Sun E."/>
            <person name="Svirskas R."/>
            <person name="Tector C."/>
            <person name="Turner R."/>
            <person name="Venter E."/>
            <person name="Wang A.H."/>
            <person name="Wang X."/>
            <person name="Wang Z.-Y."/>
            <person name="Wassarman D.A."/>
            <person name="Weinstock G.M."/>
            <person name="Weissenbach J."/>
            <person name="Williams S.M."/>
            <person name="Woodage T."/>
            <person name="Worley K.C."/>
            <person name="Wu D."/>
            <person name="Yang S."/>
            <person name="Yao Q.A."/>
            <person name="Ye J."/>
            <person name="Yeh R.-F."/>
            <person name="Zaveri J.S."/>
            <person name="Zhan M."/>
            <person name="Zhang G."/>
            <person name="Zhao Q."/>
            <person name="Zheng L."/>
            <person name="Zheng X.H."/>
            <person name="Zhong F.N."/>
            <person name="Zhong W."/>
            <person name="Zhou X."/>
            <person name="Zhu S.C."/>
            <person name="Zhu X."/>
            <person name="Smith H.O."/>
            <person name="Gibbs R.A."/>
            <person name="Myers E.W."/>
            <person name="Rubin G.M."/>
            <person name="Venter J.C."/>
        </authorList>
    </citation>
    <scope>NUCLEOTIDE SEQUENCE [LARGE SCALE GENOMIC DNA]</scope>
    <source>
        <strain evidence="6">Berkeley</strain>
    </source>
</reference>
<reference evidence="20 22" key="5">
    <citation type="journal article" date="2002" name="Genome Biol.">
        <title>Annotation of the Drosophila melanogaster euchromatic genome: a systematic review.</title>
        <authorList>
            <person name="Misra S."/>
            <person name="Crosby M.A."/>
            <person name="Mungall C.J."/>
            <person name="Matthews B.B."/>
            <person name="Campbell K.S."/>
            <person name="Hradecky P."/>
            <person name="Huang Y."/>
            <person name="Kaminker J.S."/>
            <person name="Millburn G.H."/>
            <person name="Prochnik S.E."/>
            <person name="Smith C.D."/>
            <person name="Tupy J.L."/>
            <person name="Whitfield E.J."/>
            <person name="Bayraktaroglu L."/>
            <person name="Berman B.P."/>
            <person name="Bettencourt B.R."/>
            <person name="Celniker S.E."/>
            <person name="de Grey A.D.N.J."/>
            <person name="Drysdale R.A."/>
            <person name="Harris N.L."/>
            <person name="Richter J."/>
            <person name="Russo S."/>
            <person name="Schroeder A.J."/>
            <person name="Shu S.Q."/>
            <person name="Stapleton M."/>
            <person name="Yamada C."/>
            <person name="Ashburner M."/>
            <person name="Gelbart W.M."/>
            <person name="Rubin G.M."/>
            <person name="Lewis S.E."/>
        </authorList>
    </citation>
    <scope>GENOME REANNOTATION</scope>
    <source>
        <strain>Berkeley</strain>
    </source>
</reference>
<reference evidence="23" key="6">
    <citation type="journal article" date="2002" name="Genome Biol.">
        <title>A Drosophila full-length cDNA resource.</title>
        <authorList>
            <person name="Stapleton M."/>
            <person name="Carlson J.W."/>
            <person name="Brokstein P."/>
            <person name="Yu C."/>
            <person name="Champe M."/>
            <person name="George R.A."/>
            <person name="Guarin H."/>
            <person name="Kronmiller B."/>
            <person name="Pacleb J.M."/>
            <person name="Park S."/>
            <person name="Wan K.H."/>
            <person name="Rubin G.M."/>
            <person name="Celniker S.E."/>
        </authorList>
    </citation>
    <scope>NUCLEOTIDE SEQUENCE [LARGE SCALE MRNA]</scope>
    <source>
        <strain evidence="23">Berkeley</strain>
        <tissue evidence="8">Head</tissue>
    </source>
</reference>
<reference evidence="20" key="7">
    <citation type="journal article" date="1998" name="Cell">
        <title>The cryb mutation identifies cryptochrome as a circadian photoreceptor in Drosophila.</title>
        <authorList>
            <person name="Stanewsky R."/>
            <person name="Kaneko M."/>
            <person name="Emery P."/>
            <person name="Beretta B."/>
            <person name="Wager-Smith K."/>
            <person name="Kay S.A."/>
            <person name="Rosbash M."/>
            <person name="Hall J.C."/>
        </authorList>
    </citation>
    <scope>PARTIAL NUCLEOTIDE SEQUENCE [GENOMIC DNA / MRNA]</scope>
    <scope>FUNCTION</scope>
    <scope>MUTAGENESIS OF ASP-410</scope>
    <scope>DISRUPTION PHENOTYPE</scope>
</reference>
<reference evidence="20" key="8">
    <citation type="journal article" date="1999" name="J. Neurosci.">
        <title>An extraretinally expressed insect cryptochrome with similarity to the blue light photoreceptors of mammals and plants.</title>
        <authorList>
            <person name="Egan E.S."/>
            <person name="Franklin T.M."/>
            <person name="Hilderbrand-Chae M.J."/>
            <person name="McNeil G.P."/>
            <person name="Roberts M.A."/>
            <person name="Schroeder A.J."/>
            <person name="Zhang X."/>
            <person name="Jackson F.R."/>
        </authorList>
    </citation>
    <scope>FUNCTION</scope>
    <scope>TISSUE SPECIFICITY</scope>
</reference>
<reference evidence="20" key="9">
    <citation type="journal article" date="1999" name="Science">
        <title>Light-dependent sequestration of TIMELESS by CRYPTOCHROME.</title>
        <authorList>
            <person name="Ceriani M.F."/>
            <person name="Darlington T.K."/>
            <person name="Staknis D."/>
            <person name="Mas P."/>
            <person name="Petti A.A."/>
            <person name="Weitz C.J."/>
            <person name="Kay S.A."/>
        </authorList>
    </citation>
    <scope>FUNCTION</scope>
    <scope>INTERACTION WITH TIM</scope>
    <scope>SUBCELLULAR LOCATION</scope>
</reference>
<reference key="10">
    <citation type="journal article" date="2001" name="Curr. Biol.">
        <title>Light-dependent interaction between Drosophila CRY and the clock protein PER mediated by the carboxy terminus of CRY.</title>
        <authorList>
            <person name="Rosato E."/>
            <person name="Codd V."/>
            <person name="Mazzotta G."/>
            <person name="Piccin A."/>
            <person name="Zordan M."/>
            <person name="Costa R."/>
            <person name="Kyriacou C.P."/>
        </authorList>
    </citation>
    <scope>INTERACTION WITH PER</scope>
</reference>
<reference evidence="20" key="11">
    <citation type="journal article" date="2004" name="Nat. Neurosci.">
        <title>A constitutively active cryptochrome in Drosophila melanogaster.</title>
        <authorList>
            <person name="Dissel S."/>
            <person name="Codd V."/>
            <person name="Fedic R."/>
            <person name="Garner K.J."/>
            <person name="Costa R."/>
            <person name="Kyriacou C.P."/>
            <person name="Rosato E."/>
        </authorList>
    </citation>
    <scope>SUBCELLULAR LOCATION</scope>
    <scope>C-TERMINAL DOMAIN</scope>
</reference>
<reference evidence="20" key="12">
    <citation type="journal article" date="2006" name="Curr. Biol.">
        <title>Drosophila CRYPTOCHROME is a circadian transcriptional repressor.</title>
        <authorList>
            <person name="Collins B."/>
            <person name="Mazzoni E.O."/>
            <person name="Stanewsky R."/>
            <person name="Blau J."/>
        </authorList>
    </citation>
    <scope>FUNCTION</scope>
</reference>
<reference evidence="20" key="13">
    <citation type="journal article" date="2007" name="J. Biol. Chem.">
        <title>A novel photoreaction mechanism for the circadian blue light photoreceptor Drosophila cryptochrome.</title>
        <authorList>
            <person name="Berndt A."/>
            <person name="Kottke T."/>
            <person name="Breitkreuz H."/>
            <person name="Dvorsky R."/>
            <person name="Hennig S."/>
            <person name="Alexander M."/>
            <person name="Wolf E."/>
        </authorList>
    </citation>
    <scope>FUNCTION</scope>
    <scope>FAD-BINDING</scope>
</reference>
<reference evidence="20" key="14">
    <citation type="journal article" date="2008" name="Nature">
        <title>Cryptochrome mediates light-dependent magnetosensitivity in Drosophila.</title>
        <authorList>
            <person name="Gegear R.J."/>
            <person name="Casselman A."/>
            <person name="Waddell S."/>
            <person name="Reppert S.M."/>
        </authorList>
    </citation>
    <scope>FUNCTION</scope>
</reference>
<reference evidence="20" key="15">
    <citation type="journal article" date="2008" name="PLoS Biol.">
        <title>Human and Drosophila cryptochromes are light activated by flavin photoreduction in living cells.</title>
        <authorList>
            <person name="Hoang N."/>
            <person name="Schleicher E."/>
            <person name="Kacprzak S."/>
            <person name="Bouly J.-P."/>
            <person name="Picot M."/>
            <person name="Wu W."/>
            <person name="Berndt A."/>
            <person name="Wolf E."/>
            <person name="Bittl R."/>
            <person name="Ahmad M."/>
        </authorList>
    </citation>
    <scope>FUNCTION</scope>
    <scope>FAD-BINDING</scope>
</reference>
<reference key="16">
    <citation type="journal article" date="2016" name="Nat. Mater.">
        <title>A magnetic protein biocompass.</title>
        <authorList>
            <person name="Qin S."/>
            <person name="Yin H."/>
            <person name="Yang C."/>
            <person name="Dou Y."/>
            <person name="Liu Z."/>
            <person name="Zhang P."/>
            <person name="Yu H."/>
            <person name="Huang Y."/>
            <person name="Feng J."/>
            <person name="Hao J."/>
            <person name="Hao J."/>
            <person name="Deng L."/>
            <person name="Yan X."/>
            <person name="Dong X."/>
            <person name="Zhao Z."/>
            <person name="Jiang T."/>
            <person name="Wang H.W."/>
            <person name="Luo S.J."/>
            <person name="Xie C."/>
        </authorList>
    </citation>
    <scope>INTERACTION WITH L(1)G0136</scope>
</reference>
<reference key="17">
    <citation type="journal article" date="2023" name="IScience">
        <title>Visual and circadian regulation of Drosophila BDBT and BDBT effects on DBT and PER localization.</title>
        <authorList>
            <person name="Nolan R.B."/>
            <person name="Bontrager C."/>
            <person name="Bowser A."/>
            <person name="Corley A."/>
            <person name="Fiedler H."/>
            <person name="Flathers C."/>
            <person name="Francis L."/>
            <person name="Le A."/>
            <person name="Mahmoudjafari S."/>
            <person name="Nim T."/>
            <person name="Muolo C.E."/>
            <person name="Shores B."/>
            <person name="Viermann C."/>
            <person name="Waldren A."/>
            <person name="Zatezalo C."/>
            <person name="Fan J.Y."/>
            <person name="Price J.L."/>
        </authorList>
    </citation>
    <scope>FUNCTION</scope>
    <scope>MUTAGENESIS OF ASP-410</scope>
</reference>
<reference key="18">
    <citation type="journal article" date="2013" name="Cell">
        <title>Structures of Drosophila cryptochrome and mouse cryptochrome1 provide insight into circadian function.</title>
        <authorList>
            <person name="Czarna A."/>
            <person name="Berndt A."/>
            <person name="Singh H.R."/>
            <person name="Grudziecki A."/>
            <person name="Ladurner A.G."/>
            <person name="Timinszky G."/>
            <person name="Kramer A."/>
            <person name="Wolf E."/>
        </authorList>
    </citation>
    <scope>X-RAY CRYSTALLOGRAPHY (2.34 ANGSTROMS) IN COMPLEX WITH FAD</scope>
    <scope>COFACTOR</scope>
    <scope>MUTAGENESIS OF CYS-337; TRP-397; CYS-416; TRP-420; CYS-523 AND SER-526</scope>
</reference>
<reference key="19">
    <citation type="journal article" date="2013" name="Nature">
        <title>Updated structure of Drosophila cryptochrome.</title>
        <authorList>
            <person name="Levy C."/>
            <person name="Zoltowski B.D."/>
            <person name="Jones A.R."/>
            <person name="Vaidya A.T."/>
            <person name="Top D."/>
            <person name="Widom J."/>
            <person name="Young M.W."/>
            <person name="Scrutton N.S."/>
            <person name="Crane B.R."/>
            <person name="Leys D."/>
        </authorList>
    </citation>
    <scope>X-RAY CRYSTALLOGRAPHY (2.3 ANGSTROMS) OF 1-539 IN COMPLEX WITH FAD</scope>
</reference>